<reference key="1">
    <citation type="journal article" date="1995" name="Nat. Genet.">
        <title>Analysis of the nucleotide sequence of chromosome VI from Saccharomyces cerevisiae.</title>
        <authorList>
            <person name="Murakami Y."/>
            <person name="Naitou M."/>
            <person name="Hagiwara H."/>
            <person name="Shibata T."/>
            <person name="Ozawa M."/>
            <person name="Sasanuma S."/>
            <person name="Sasanuma M."/>
            <person name="Tsuchiya Y."/>
            <person name="Soeda E."/>
            <person name="Yokoyama K."/>
            <person name="Yamazaki M."/>
            <person name="Tashiro H."/>
            <person name="Eki T."/>
        </authorList>
    </citation>
    <scope>NUCLEOTIDE SEQUENCE [LARGE SCALE GENOMIC DNA]</scope>
    <source>
        <strain>ATCC 204508 / S288c</strain>
    </source>
</reference>
<reference key="2">
    <citation type="submission" date="1998-01" db="EMBL/GenBank/DDBJ databases">
        <authorList>
            <person name="Murakami Y."/>
        </authorList>
    </citation>
    <scope>SEQUENCE REVISION</scope>
</reference>
<reference key="3">
    <citation type="journal article" date="2014" name="G3 (Bethesda)">
        <title>The reference genome sequence of Saccharomyces cerevisiae: Then and now.</title>
        <authorList>
            <person name="Engel S.R."/>
            <person name="Dietrich F.S."/>
            <person name="Fisk D.G."/>
            <person name="Binkley G."/>
            <person name="Balakrishnan R."/>
            <person name="Costanzo M.C."/>
            <person name="Dwight S.S."/>
            <person name="Hitz B.C."/>
            <person name="Karra K."/>
            <person name="Nash R.S."/>
            <person name="Weng S."/>
            <person name="Wong E.D."/>
            <person name="Lloyd P."/>
            <person name="Skrzypek M.S."/>
            <person name="Miyasato S.R."/>
            <person name="Simison M."/>
            <person name="Cherry J.M."/>
        </authorList>
    </citation>
    <scope>GENOME REANNOTATION</scope>
    <source>
        <strain>ATCC 204508 / S288c</strain>
    </source>
</reference>
<reference key="4">
    <citation type="journal article" date="2007" name="J. Proteome Res.">
        <title>Large-scale phosphorylation analysis of alpha-factor-arrested Saccharomyces cerevisiae.</title>
        <authorList>
            <person name="Li X."/>
            <person name="Gerber S.A."/>
            <person name="Rudner A.D."/>
            <person name="Beausoleil S.A."/>
            <person name="Haas W."/>
            <person name="Villen J."/>
            <person name="Elias J.E."/>
            <person name="Gygi S.P."/>
        </authorList>
    </citation>
    <scope>PHOSPHORYLATION [LARGE SCALE ANALYSIS] AT THR-110; SER-113; THR-143 AND SER-149</scope>
    <scope>IDENTIFICATION BY MASS SPECTROMETRY [LARGE SCALE ANALYSIS]</scope>
    <source>
        <strain>ADR376</strain>
    </source>
</reference>
<reference key="5">
    <citation type="journal article" date="2008" name="Mol. Cell. Proteomics">
        <title>A multidimensional chromatography technology for in-depth phosphoproteome analysis.</title>
        <authorList>
            <person name="Albuquerque C.P."/>
            <person name="Smolka M.B."/>
            <person name="Payne S.H."/>
            <person name="Bafna V."/>
            <person name="Eng J."/>
            <person name="Zhou H."/>
        </authorList>
    </citation>
    <scope>PHOSPHORYLATION [LARGE SCALE ANALYSIS] AT SER-140</scope>
    <scope>IDENTIFICATION BY MASS SPECTROMETRY [LARGE SCALE ANALYSIS]</scope>
</reference>
<reference key="6">
    <citation type="journal article" date="2009" name="Science">
        <title>Global analysis of Cdk1 substrate phosphorylation sites provides insights into evolution.</title>
        <authorList>
            <person name="Holt L.J."/>
            <person name="Tuch B.B."/>
            <person name="Villen J."/>
            <person name="Johnson A.D."/>
            <person name="Gygi S.P."/>
            <person name="Morgan D.O."/>
        </authorList>
    </citation>
    <scope>PHOSPHORYLATION [LARGE SCALE ANALYSIS] AT SER-140 AND THR-143</scope>
    <scope>IDENTIFICATION BY MASS SPECTROMETRY [LARGE SCALE ANALYSIS]</scope>
</reference>
<reference key="7">
    <citation type="journal article" date="2015" name="Elife">
        <title>A new family of StART domain proteins at membrane contact sites has a role in ER-PM sterol transport.</title>
        <authorList>
            <person name="Gatta A.T."/>
            <person name="Wong L.H."/>
            <person name="Sere Y.Y."/>
            <person name="Calderon-Norena D.M."/>
            <person name="Cockcroft S."/>
            <person name="Menon A.K."/>
            <person name="Levine T.P."/>
        </authorList>
    </citation>
    <scope>FUNCTION</scope>
    <scope>SUBCELLULAR LOCATION</scope>
</reference>
<reference key="8">
    <citation type="journal article" date="2015" name="J. Cell Biol.">
        <title>Ltc1 is an ER-localized sterol transporter and a component of ER-mitochondria and ER-vacuole contacts.</title>
        <authorList>
            <person name="Murley A."/>
            <person name="Sarsam R.D."/>
            <person name="Toulmay A."/>
            <person name="Yamada J."/>
            <person name="Prinz W.A."/>
            <person name="Nunnari J."/>
        </authorList>
    </citation>
    <scope>GENE FAMILY</scope>
</reference>
<protein>
    <recommendedName>
        <fullName evidence="7">Membrane-anchored lipid-binding protein LAM5</fullName>
    </recommendedName>
    <alternativeName>
        <fullName evidence="6">Lipid transfer at contact site protein 2</fullName>
    </alternativeName>
    <alternativeName>
        <fullName evidence="7">Lipid transfer protein anchored at membrane contact sites 1</fullName>
    </alternativeName>
</protein>
<feature type="chain" id="PRO_0000202673" description="Membrane-anchored lipid-binding protein LAM5">
    <location>
        <begin position="1"/>
        <end position="674"/>
    </location>
</feature>
<feature type="topological domain" description="Cytoplasmic" evidence="8">
    <location>
        <begin position="1"/>
        <end position="633"/>
    </location>
</feature>
<feature type="transmembrane region" description="Helical" evidence="2">
    <location>
        <begin position="634"/>
        <end position="654"/>
    </location>
</feature>
<feature type="topological domain" description="Lumenal" evidence="8">
    <location>
        <begin position="655"/>
        <end position="674"/>
    </location>
</feature>
<feature type="domain" description="GRAM" evidence="2">
    <location>
        <begin position="198"/>
        <end position="264"/>
    </location>
</feature>
<feature type="domain" description="VASt" evidence="3">
    <location>
        <begin position="409"/>
        <end position="582"/>
    </location>
</feature>
<feature type="region of interest" description="Disordered" evidence="4">
    <location>
        <begin position="1"/>
        <end position="52"/>
    </location>
</feature>
<feature type="region of interest" description="Disordered" evidence="4">
    <location>
        <begin position="65"/>
        <end position="151"/>
    </location>
</feature>
<feature type="region of interest" description="Disordered" evidence="4">
    <location>
        <begin position="336"/>
        <end position="380"/>
    </location>
</feature>
<feature type="compositionally biased region" description="Basic and acidic residues" evidence="4">
    <location>
        <begin position="69"/>
        <end position="81"/>
    </location>
</feature>
<feature type="compositionally biased region" description="Low complexity" evidence="4">
    <location>
        <begin position="82"/>
        <end position="119"/>
    </location>
</feature>
<feature type="compositionally biased region" description="Acidic residues" evidence="4">
    <location>
        <begin position="336"/>
        <end position="357"/>
    </location>
</feature>
<feature type="compositionally biased region" description="Low complexity" evidence="4">
    <location>
        <begin position="358"/>
        <end position="371"/>
    </location>
</feature>
<feature type="modified residue" description="Phosphothreonine" evidence="10">
    <location>
        <position position="110"/>
    </location>
</feature>
<feature type="modified residue" description="Phosphoserine" evidence="10">
    <location>
        <position position="113"/>
    </location>
</feature>
<feature type="modified residue" description="Phosphoserine" evidence="11 12">
    <location>
        <position position="140"/>
    </location>
</feature>
<feature type="modified residue" description="Phosphothreonine" evidence="10 12">
    <location>
        <position position="143"/>
    </location>
</feature>
<feature type="modified residue" description="Phosphoserine" evidence="10">
    <location>
        <position position="149"/>
    </location>
</feature>
<comment type="function">
    <text evidence="5">May be involved in sterol transfer between intracellular membranes.</text>
</comment>
<comment type="subcellular location">
    <subcellularLocation>
        <location evidence="5">Endoplasmic reticulum membrane</location>
        <topology evidence="2">Single-pass membrane protein</topology>
    </subcellularLocation>
    <text evidence="5">Localizes to intracellular puncta representing endoplasmic reticulum (ER)-mitochondrion membrane contact sites, nucleus-vacuole junctions (NVJ) and other non-NVJ ER-vacuole contact sites.</text>
</comment>
<comment type="domain">
    <text evidence="1">The VASt domain bind sterols.</text>
</comment>
<comment type="similarity">
    <text evidence="8">Belongs to the YSP2 family.</text>
</comment>
<proteinExistence type="evidence at protein level"/>
<accession>P43560</accession>
<accession>D6VTI7</accession>
<accession>P43559</accession>
<name>LAM5_YEAST</name>
<keyword id="KW-0256">Endoplasmic reticulum</keyword>
<keyword id="KW-0472">Membrane</keyword>
<keyword id="KW-0597">Phosphoprotein</keyword>
<keyword id="KW-1185">Reference proteome</keyword>
<keyword id="KW-0812">Transmembrane</keyword>
<keyword id="KW-1133">Transmembrane helix</keyword>
<sequence length="674" mass="76347">MSDVDNWEPVSDNEDSTDSVKQLGPPFEHASNNDNAGDTEAESLQEVPLNTETNDVRKNLVVITNQSAADEHPTEIKHDQSRTSSTSSFFSGMISSFKSNVPSPVSRSTTPTSPVSQPSIISHRREPSMGSKRRSSRRISNATIAEIGSPLQQVEKPDEVKTRLTPSQMKEDNYDHRRFVEERYMDTPYHYASEQRNKDFHETFKSVPKDDRLLDDFNCGLNRELLYQGKLYITETHLCFNSNVLGWIAKVLIAFEDVTFMEKTSAAGLFPSAISIETKMGKTLFNGFISRDAAFGLMKEVWSRTLLQKDMASENINTKAEKSGNGKEIDDAINSIDEENNDKDANDNDTNENDDENISTNETTPNSTSSSPDKEKEKAYKLRADSSYQYDGPIYHHSTSFPAEPMANNEFVLKELPFDCAPGILFEIMFNSEQNEFLLDFLRGQEGSQITTIPNFTSIDGSSMTLKREYSYEKALHFPAGPKSTTCYVAEVIKRKDPDTYYEVISSIRTPNVPSGGSFSTKTRYLIRWNDEITCLLRVSFWVEWTGSSWIKGMVENGCKNGQLEAAQLMERILSKFIKNNVEECQITISKEEEEQDDKEVKNKLKEVDLEQPREAVVTAPAIAEQQGLKVTMETWLFLYLIVVVLLLFNLFYIRSIAVSLHQLVKLQLVELKL</sequence>
<evidence type="ECO:0000250" key="1">
    <source>
        <dbReference type="UniProtKB" id="P38800"/>
    </source>
</evidence>
<evidence type="ECO:0000255" key="2"/>
<evidence type="ECO:0000255" key="3">
    <source>
        <dbReference type="PROSITE-ProRule" id="PRU01114"/>
    </source>
</evidence>
<evidence type="ECO:0000256" key="4">
    <source>
        <dbReference type="SAM" id="MobiDB-lite"/>
    </source>
</evidence>
<evidence type="ECO:0000269" key="5">
    <source>
    </source>
</evidence>
<evidence type="ECO:0000303" key="6">
    <source>
    </source>
</evidence>
<evidence type="ECO:0000303" key="7">
    <source>
    </source>
</evidence>
<evidence type="ECO:0000305" key="8"/>
<evidence type="ECO:0000312" key="9">
    <source>
        <dbReference type="SGD" id="S000001852"/>
    </source>
</evidence>
<evidence type="ECO:0007744" key="10">
    <source>
    </source>
</evidence>
<evidence type="ECO:0007744" key="11">
    <source>
    </source>
</evidence>
<evidence type="ECO:0007744" key="12">
    <source>
    </source>
</evidence>
<organism>
    <name type="scientific">Saccharomyces cerevisiae (strain ATCC 204508 / S288c)</name>
    <name type="common">Baker's yeast</name>
    <dbReference type="NCBI Taxonomy" id="559292"/>
    <lineage>
        <taxon>Eukaryota</taxon>
        <taxon>Fungi</taxon>
        <taxon>Dikarya</taxon>
        <taxon>Ascomycota</taxon>
        <taxon>Saccharomycotina</taxon>
        <taxon>Saccharomycetes</taxon>
        <taxon>Saccharomycetales</taxon>
        <taxon>Saccharomycetaceae</taxon>
        <taxon>Saccharomyces</taxon>
    </lineage>
</organism>
<dbReference type="EMBL" id="D50617">
    <property type="protein sequence ID" value="BAA24424.1"/>
    <property type="molecule type" value="Genomic_DNA"/>
</dbReference>
<dbReference type="EMBL" id="BK006940">
    <property type="protein sequence ID" value="DAA12397.1"/>
    <property type="molecule type" value="Genomic_DNA"/>
</dbReference>
<dbReference type="PIR" id="S78570">
    <property type="entry name" value="S78570"/>
</dbReference>
<dbReference type="RefSeq" id="NP_116611.1">
    <property type="nucleotide sequence ID" value="NM_001179924.1"/>
</dbReference>
<dbReference type="SMR" id="P43560"/>
<dbReference type="BioGRID" id="31104">
    <property type="interactions" value="49"/>
</dbReference>
<dbReference type="DIP" id="DIP-1182N"/>
<dbReference type="FunCoup" id="P43560">
    <property type="interactions" value="194"/>
</dbReference>
<dbReference type="IntAct" id="P43560">
    <property type="interactions" value="7"/>
</dbReference>
<dbReference type="MINT" id="P43560"/>
<dbReference type="STRING" id="4932.YFL042C"/>
<dbReference type="TCDB" id="9.B.198.2.3">
    <property type="family name" value="the membrane-anchored lipid-binding protein (lam) family"/>
</dbReference>
<dbReference type="GlyGen" id="P43560">
    <property type="glycosylation" value="2 sites, 1 O-linked glycan (2 sites)"/>
</dbReference>
<dbReference type="iPTMnet" id="P43560"/>
<dbReference type="PaxDb" id="4932-YFL042C"/>
<dbReference type="PeptideAtlas" id="P43560"/>
<dbReference type="EnsemblFungi" id="YFL042C_mRNA">
    <property type="protein sequence ID" value="YFL042C"/>
    <property type="gene ID" value="YFL042C"/>
</dbReference>
<dbReference type="GeneID" id="850501"/>
<dbReference type="KEGG" id="sce:YFL042C"/>
<dbReference type="AGR" id="SGD:S000001852"/>
<dbReference type="SGD" id="S000001852">
    <property type="gene designation" value="LAM5"/>
</dbReference>
<dbReference type="VEuPathDB" id="FungiDB:YFL042C"/>
<dbReference type="eggNOG" id="KOG1032">
    <property type="taxonomic scope" value="Eukaryota"/>
</dbReference>
<dbReference type="GeneTree" id="ENSGT00940000176474"/>
<dbReference type="HOGENOM" id="CLU_015638_1_1_1"/>
<dbReference type="InParanoid" id="P43560"/>
<dbReference type="OMA" id="DNWEPVS"/>
<dbReference type="OrthoDB" id="2162691at2759"/>
<dbReference type="BioCyc" id="YEAST:G3O-30421-MONOMER"/>
<dbReference type="BioGRID-ORCS" id="850501">
    <property type="hits" value="3 hits in 10 CRISPR screens"/>
</dbReference>
<dbReference type="PRO" id="PR:P43560"/>
<dbReference type="Proteomes" id="UP000002311">
    <property type="component" value="Chromosome VI"/>
</dbReference>
<dbReference type="RNAct" id="P43560">
    <property type="molecule type" value="protein"/>
</dbReference>
<dbReference type="GO" id="GO:0032541">
    <property type="term" value="C:cortical endoplasmic reticulum"/>
    <property type="evidence" value="ECO:0000318"/>
    <property type="project" value="GO_Central"/>
</dbReference>
<dbReference type="GO" id="GO:0005783">
    <property type="term" value="C:endoplasmic reticulum"/>
    <property type="evidence" value="ECO:0007005"/>
    <property type="project" value="SGD"/>
</dbReference>
<dbReference type="GO" id="GO:0005789">
    <property type="term" value="C:endoplasmic reticulum membrane"/>
    <property type="evidence" value="ECO:0000318"/>
    <property type="project" value="GO_Central"/>
</dbReference>
<dbReference type="GO" id="GO:0140268">
    <property type="term" value="C:endoplasmic reticulum-plasma membrane contact site"/>
    <property type="evidence" value="ECO:0000318"/>
    <property type="project" value="GO_Central"/>
</dbReference>
<dbReference type="GO" id="GO:0044233">
    <property type="term" value="C:mitochondria-associated endoplasmic reticulum membrane contact site"/>
    <property type="evidence" value="ECO:0000314"/>
    <property type="project" value="SGD"/>
</dbReference>
<dbReference type="GO" id="GO:0005739">
    <property type="term" value="C:mitochondrion"/>
    <property type="evidence" value="ECO:0000318"/>
    <property type="project" value="GO_Central"/>
</dbReference>
<dbReference type="GO" id="GO:0071561">
    <property type="term" value="C:nucleus-vacuole junction"/>
    <property type="evidence" value="ECO:0000314"/>
    <property type="project" value="SGD"/>
</dbReference>
<dbReference type="GO" id="GO:0005886">
    <property type="term" value="C:plasma membrane"/>
    <property type="evidence" value="ECO:0000318"/>
    <property type="project" value="GO_Central"/>
</dbReference>
<dbReference type="GO" id="GO:0032934">
    <property type="term" value="F:sterol binding"/>
    <property type="evidence" value="ECO:0000318"/>
    <property type="project" value="GO_Central"/>
</dbReference>
<dbReference type="GO" id="GO:0120015">
    <property type="term" value="F:sterol transfer activity"/>
    <property type="evidence" value="ECO:0000250"/>
    <property type="project" value="SGD"/>
</dbReference>
<dbReference type="GO" id="GO:0032366">
    <property type="term" value="P:intracellular sterol transport"/>
    <property type="evidence" value="ECO:0000250"/>
    <property type="project" value="SGD"/>
</dbReference>
<dbReference type="CDD" id="cd13220">
    <property type="entry name" value="PH-GRAM_GRAMDC"/>
    <property type="match status" value="1"/>
</dbReference>
<dbReference type="Gene3D" id="2.30.29.30">
    <property type="entry name" value="Pleckstrin-homology domain (PH domain)/Phosphotyrosine-binding domain (PTB)"/>
    <property type="match status" value="1"/>
</dbReference>
<dbReference type="InterPro" id="IPR051482">
    <property type="entry name" value="Cholesterol_transport"/>
</dbReference>
<dbReference type="InterPro" id="IPR004182">
    <property type="entry name" value="GRAM"/>
</dbReference>
<dbReference type="InterPro" id="IPR011993">
    <property type="entry name" value="PH-like_dom_sf"/>
</dbReference>
<dbReference type="InterPro" id="IPR031968">
    <property type="entry name" value="VASt"/>
</dbReference>
<dbReference type="PANTHER" id="PTHR23319">
    <property type="entry name" value="GRAM DOMAIN CONTAINING 1B, ISOFORM E"/>
    <property type="match status" value="1"/>
</dbReference>
<dbReference type="PANTHER" id="PTHR23319:SF4">
    <property type="entry name" value="GRAM DOMAIN CONTAINING 1B, ISOFORM E"/>
    <property type="match status" value="1"/>
</dbReference>
<dbReference type="Pfam" id="PF02893">
    <property type="entry name" value="GRAM"/>
    <property type="match status" value="1"/>
</dbReference>
<dbReference type="Pfam" id="PF16016">
    <property type="entry name" value="VASt"/>
    <property type="match status" value="1"/>
</dbReference>
<dbReference type="SMART" id="SM00568">
    <property type="entry name" value="GRAM"/>
    <property type="match status" value="1"/>
</dbReference>
<dbReference type="PROSITE" id="PS51778">
    <property type="entry name" value="VAST"/>
    <property type="match status" value="1"/>
</dbReference>
<gene>
    <name evidence="7" type="primary">LAM5</name>
    <name evidence="6" type="synonym">LTC2</name>
    <name evidence="9" type="ordered locus">YFL042C</name>
</gene>